<keyword id="KW-0106">Calcium</keyword>
<keyword id="KW-0479">Metal-binding</keyword>
<keyword id="KW-1185">Reference proteome</keyword>
<keyword id="KW-0819">tRNA processing</keyword>
<gene>
    <name type="ordered locus">AF_1495</name>
</gene>
<comment type="function">
    <text evidence="1">Activates the tRNA-splicing ligase complex by facilitating the enzymatic turnover of catalytic subunit RtcB. Acts by promoting the guanylylation of RtcB, a key intermediate step in tRNA ligation. Can also alter the NTP specificity of RtcB such that ATP, dGTP or ITP is used efficiently (By similarity).</text>
</comment>
<comment type="similarity">
    <text evidence="2">Belongs to the archease family.</text>
</comment>
<accession>O28777</accession>
<name>ARCH_ARCFU</name>
<evidence type="ECO:0000250" key="1"/>
<evidence type="ECO:0000255" key="2">
    <source>
        <dbReference type="HAMAP-Rule" id="MF_01222"/>
    </source>
</evidence>
<protein>
    <recommendedName>
        <fullName evidence="2">Protein archease</fullName>
    </recommendedName>
</protein>
<proteinExistence type="inferred from homology"/>
<dbReference type="EMBL" id="AE000782">
    <property type="protein sequence ID" value="AAB89747.1"/>
    <property type="molecule type" value="Genomic_DNA"/>
</dbReference>
<dbReference type="PIR" id="F69436">
    <property type="entry name" value="F69436"/>
</dbReference>
<dbReference type="RefSeq" id="WP_010878992.1">
    <property type="nucleotide sequence ID" value="NC_000917.1"/>
</dbReference>
<dbReference type="SMR" id="O28777"/>
<dbReference type="STRING" id="224325.AF_1495"/>
<dbReference type="PaxDb" id="224325-AF_1495"/>
<dbReference type="DNASU" id="1484722"/>
<dbReference type="EnsemblBacteria" id="AAB89747">
    <property type="protein sequence ID" value="AAB89747"/>
    <property type="gene ID" value="AF_1495"/>
</dbReference>
<dbReference type="KEGG" id="afu:AF_1495"/>
<dbReference type="eggNOG" id="arCOG04055">
    <property type="taxonomic scope" value="Archaea"/>
</dbReference>
<dbReference type="HOGENOM" id="CLU_111362_3_0_2"/>
<dbReference type="OrthoDB" id="8831at2157"/>
<dbReference type="PhylomeDB" id="O28777"/>
<dbReference type="Proteomes" id="UP000002199">
    <property type="component" value="Chromosome"/>
</dbReference>
<dbReference type="GO" id="GO:0005509">
    <property type="term" value="F:calcium ion binding"/>
    <property type="evidence" value="ECO:0007669"/>
    <property type="project" value="UniProtKB-UniRule"/>
</dbReference>
<dbReference type="GO" id="GO:0006388">
    <property type="term" value="P:tRNA splicing, via endonucleolytic cleavage and ligation"/>
    <property type="evidence" value="ECO:0007669"/>
    <property type="project" value="UniProtKB-UniRule"/>
</dbReference>
<dbReference type="Gene3D" id="3.55.10.10">
    <property type="entry name" value="Archease domain"/>
    <property type="match status" value="1"/>
</dbReference>
<dbReference type="HAMAP" id="MF_01222">
    <property type="entry name" value="Archease_arch"/>
    <property type="match status" value="1"/>
</dbReference>
<dbReference type="InterPro" id="IPR002804">
    <property type="entry name" value="Archease"/>
</dbReference>
<dbReference type="InterPro" id="IPR022952">
    <property type="entry name" value="Archease_arc"/>
</dbReference>
<dbReference type="InterPro" id="IPR023572">
    <property type="entry name" value="Archease_dom"/>
</dbReference>
<dbReference type="InterPro" id="IPR036820">
    <property type="entry name" value="Archease_dom_sf"/>
</dbReference>
<dbReference type="PANTHER" id="PTHR12682">
    <property type="entry name" value="ARCHEASE"/>
    <property type="match status" value="1"/>
</dbReference>
<dbReference type="PANTHER" id="PTHR12682:SF11">
    <property type="entry name" value="PROTEIN ARCHEASE"/>
    <property type="match status" value="1"/>
</dbReference>
<dbReference type="Pfam" id="PF01951">
    <property type="entry name" value="Archease"/>
    <property type="match status" value="1"/>
</dbReference>
<dbReference type="SUPFAM" id="SSF69819">
    <property type="entry name" value="MTH1598-like"/>
    <property type="match status" value="1"/>
</dbReference>
<feature type="chain" id="PRO_0000068841" description="Protein archease">
    <location>
        <begin position="1"/>
        <end position="137"/>
    </location>
</feature>
<feature type="binding site" evidence="1">
    <location>
        <position position="11"/>
    </location>
    <ligand>
        <name>Ca(2+)</name>
        <dbReference type="ChEBI" id="CHEBI:29108"/>
    </ligand>
</feature>
<feature type="binding site" evidence="1">
    <location>
        <position position="136"/>
    </location>
    <ligand>
        <name>Ca(2+)</name>
        <dbReference type="ChEBI" id="CHEBI:29108"/>
    </ligand>
</feature>
<feature type="binding site" evidence="1">
    <location>
        <position position="137"/>
    </location>
    <ligand>
        <name>Ca(2+)</name>
        <dbReference type="ChEBI" id="CHEBI:29108"/>
    </ligand>
</feature>
<organism>
    <name type="scientific">Archaeoglobus fulgidus (strain ATCC 49558 / DSM 4304 / JCM 9628 / NBRC 100126 / VC-16)</name>
    <dbReference type="NCBI Taxonomy" id="224325"/>
    <lineage>
        <taxon>Archaea</taxon>
        <taxon>Methanobacteriati</taxon>
        <taxon>Methanobacteriota</taxon>
        <taxon>Archaeoglobi</taxon>
        <taxon>Archaeoglobales</taxon>
        <taxon>Archaeoglobaceae</taxon>
        <taxon>Archaeoglobus</taxon>
    </lineage>
</organism>
<sequence length="137" mass="15549">MKYRFIDHTADIAFEVYGSNLRELFENAALAFYDAFVDTSGIGIEREVGVECEGEDVEITLYRWLNELLYLFDTEFFAAKDVEVEVEEGDGVKASGKLRGGRFSAEMVKVEPKAITLHKFRVEKTDKGYVAFVVVDI</sequence>
<reference key="1">
    <citation type="journal article" date="1997" name="Nature">
        <title>The complete genome sequence of the hyperthermophilic, sulphate-reducing archaeon Archaeoglobus fulgidus.</title>
        <authorList>
            <person name="Klenk H.-P."/>
            <person name="Clayton R.A."/>
            <person name="Tomb J.-F."/>
            <person name="White O."/>
            <person name="Nelson K.E."/>
            <person name="Ketchum K.A."/>
            <person name="Dodson R.J."/>
            <person name="Gwinn M.L."/>
            <person name="Hickey E.K."/>
            <person name="Peterson J.D."/>
            <person name="Richardson D.L."/>
            <person name="Kerlavage A.R."/>
            <person name="Graham D.E."/>
            <person name="Kyrpides N.C."/>
            <person name="Fleischmann R.D."/>
            <person name="Quackenbush J."/>
            <person name="Lee N.H."/>
            <person name="Sutton G.G."/>
            <person name="Gill S.R."/>
            <person name="Kirkness E.F."/>
            <person name="Dougherty B.A."/>
            <person name="McKenney K."/>
            <person name="Adams M.D."/>
            <person name="Loftus B.J."/>
            <person name="Peterson S.N."/>
            <person name="Reich C.I."/>
            <person name="McNeil L.K."/>
            <person name="Badger J.H."/>
            <person name="Glodek A."/>
            <person name="Zhou L."/>
            <person name="Overbeek R."/>
            <person name="Gocayne J.D."/>
            <person name="Weidman J.F."/>
            <person name="McDonald L.A."/>
            <person name="Utterback T.R."/>
            <person name="Cotton M.D."/>
            <person name="Spriggs T."/>
            <person name="Artiach P."/>
            <person name="Kaine B.P."/>
            <person name="Sykes S.M."/>
            <person name="Sadow P.W."/>
            <person name="D'Andrea K.P."/>
            <person name="Bowman C."/>
            <person name="Fujii C."/>
            <person name="Garland S.A."/>
            <person name="Mason T.M."/>
            <person name="Olsen G.J."/>
            <person name="Fraser C.M."/>
            <person name="Smith H.O."/>
            <person name="Woese C.R."/>
            <person name="Venter J.C."/>
        </authorList>
    </citation>
    <scope>NUCLEOTIDE SEQUENCE [LARGE SCALE GENOMIC DNA]</scope>
    <source>
        <strain>ATCC 49558 / DSM 4304 / JCM 9628 / NBRC 100126 / VC-16</strain>
    </source>
</reference>